<name>YQGF_PHOPR</name>
<feature type="chain" id="PRO_0000172112" description="Putative pre-16S rRNA nuclease">
    <location>
        <begin position="1"/>
        <end position="142"/>
    </location>
</feature>
<dbReference type="EC" id="3.1.-.-" evidence="1"/>
<dbReference type="EMBL" id="CR378673">
    <property type="protein sequence ID" value="CAG21455.1"/>
    <property type="molecule type" value="Genomic_DNA"/>
</dbReference>
<dbReference type="RefSeq" id="WP_011219710.1">
    <property type="nucleotide sequence ID" value="NC_006370.1"/>
</dbReference>
<dbReference type="SMR" id="Q6LMM2"/>
<dbReference type="STRING" id="298386.PBPRA3140"/>
<dbReference type="KEGG" id="ppr:PBPRA3140"/>
<dbReference type="eggNOG" id="COG0816">
    <property type="taxonomic scope" value="Bacteria"/>
</dbReference>
<dbReference type="HOGENOM" id="CLU_098240_3_0_6"/>
<dbReference type="Proteomes" id="UP000000593">
    <property type="component" value="Chromosome 1"/>
</dbReference>
<dbReference type="GO" id="GO:0005829">
    <property type="term" value="C:cytosol"/>
    <property type="evidence" value="ECO:0007669"/>
    <property type="project" value="TreeGrafter"/>
</dbReference>
<dbReference type="GO" id="GO:0004518">
    <property type="term" value="F:nuclease activity"/>
    <property type="evidence" value="ECO:0007669"/>
    <property type="project" value="UniProtKB-KW"/>
</dbReference>
<dbReference type="GO" id="GO:0000967">
    <property type="term" value="P:rRNA 5'-end processing"/>
    <property type="evidence" value="ECO:0007669"/>
    <property type="project" value="UniProtKB-UniRule"/>
</dbReference>
<dbReference type="CDD" id="cd16964">
    <property type="entry name" value="YqgF"/>
    <property type="match status" value="1"/>
</dbReference>
<dbReference type="FunFam" id="3.30.420.140:FF:000002">
    <property type="entry name" value="Putative pre-16S rRNA nuclease"/>
    <property type="match status" value="1"/>
</dbReference>
<dbReference type="Gene3D" id="3.30.420.140">
    <property type="entry name" value="YqgF/RNase H-like domain"/>
    <property type="match status" value="1"/>
</dbReference>
<dbReference type="HAMAP" id="MF_00651">
    <property type="entry name" value="Nuclease_YqgF"/>
    <property type="match status" value="1"/>
</dbReference>
<dbReference type="InterPro" id="IPR012337">
    <property type="entry name" value="RNaseH-like_sf"/>
</dbReference>
<dbReference type="InterPro" id="IPR005227">
    <property type="entry name" value="YqgF"/>
</dbReference>
<dbReference type="InterPro" id="IPR006641">
    <property type="entry name" value="YqgF/RNaseH-like_dom"/>
</dbReference>
<dbReference type="InterPro" id="IPR037027">
    <property type="entry name" value="YqgF/RNaseH-like_dom_sf"/>
</dbReference>
<dbReference type="NCBIfam" id="TIGR00250">
    <property type="entry name" value="RNAse_H_YqgF"/>
    <property type="match status" value="1"/>
</dbReference>
<dbReference type="PANTHER" id="PTHR33317">
    <property type="entry name" value="POLYNUCLEOTIDYL TRANSFERASE, RIBONUCLEASE H-LIKE SUPERFAMILY PROTEIN"/>
    <property type="match status" value="1"/>
</dbReference>
<dbReference type="PANTHER" id="PTHR33317:SF4">
    <property type="entry name" value="POLYNUCLEOTIDYL TRANSFERASE, RIBONUCLEASE H-LIKE SUPERFAMILY PROTEIN"/>
    <property type="match status" value="1"/>
</dbReference>
<dbReference type="Pfam" id="PF03652">
    <property type="entry name" value="RuvX"/>
    <property type="match status" value="1"/>
</dbReference>
<dbReference type="SMART" id="SM00732">
    <property type="entry name" value="YqgFc"/>
    <property type="match status" value="1"/>
</dbReference>
<dbReference type="SUPFAM" id="SSF53098">
    <property type="entry name" value="Ribonuclease H-like"/>
    <property type="match status" value="1"/>
</dbReference>
<evidence type="ECO:0000255" key="1">
    <source>
        <dbReference type="HAMAP-Rule" id="MF_00651"/>
    </source>
</evidence>
<protein>
    <recommendedName>
        <fullName evidence="1">Putative pre-16S rRNA nuclease</fullName>
        <ecNumber evidence="1">3.1.-.-</ecNumber>
    </recommendedName>
</protein>
<comment type="function">
    <text evidence="1">Could be a nuclease involved in processing of the 5'-end of pre-16S rRNA.</text>
</comment>
<comment type="subcellular location">
    <subcellularLocation>
        <location evidence="1">Cytoplasm</location>
    </subcellularLocation>
</comment>
<comment type="similarity">
    <text evidence="1">Belongs to the YqgF nuclease family.</text>
</comment>
<accession>Q6LMM2</accession>
<organism>
    <name type="scientific">Photobacterium profundum (strain SS9)</name>
    <dbReference type="NCBI Taxonomy" id="298386"/>
    <lineage>
        <taxon>Bacteria</taxon>
        <taxon>Pseudomonadati</taxon>
        <taxon>Pseudomonadota</taxon>
        <taxon>Gammaproteobacteria</taxon>
        <taxon>Vibrionales</taxon>
        <taxon>Vibrionaceae</taxon>
        <taxon>Photobacterium</taxon>
    </lineage>
</organism>
<sequence>MSNSRSVLAFDYGTKSIGVAIGQELTGTANPLAALKAKDGIPNWDDIGKILKEWQPDLVVVGLPLNLEGGELESITPRAKKFANRIHGRFGCVVELHDERLSTVEAKAELFEHGGYRALSKGNIDSQSAVVILESWFERQYG</sequence>
<keyword id="KW-0963">Cytoplasm</keyword>
<keyword id="KW-0378">Hydrolase</keyword>
<keyword id="KW-0540">Nuclease</keyword>
<keyword id="KW-1185">Reference proteome</keyword>
<keyword id="KW-0690">Ribosome biogenesis</keyword>
<gene>
    <name type="ordered locus">PBPRA3140</name>
</gene>
<proteinExistence type="inferred from homology"/>
<reference key="1">
    <citation type="journal article" date="2005" name="Science">
        <title>Life at depth: Photobacterium profundum genome sequence and expression analysis.</title>
        <authorList>
            <person name="Vezzi A."/>
            <person name="Campanaro S."/>
            <person name="D'Angelo M."/>
            <person name="Simonato F."/>
            <person name="Vitulo N."/>
            <person name="Lauro F.M."/>
            <person name="Cestaro A."/>
            <person name="Malacrida G."/>
            <person name="Simionati B."/>
            <person name="Cannata N."/>
            <person name="Romualdi C."/>
            <person name="Bartlett D.H."/>
            <person name="Valle G."/>
        </authorList>
    </citation>
    <scope>NUCLEOTIDE SEQUENCE [LARGE SCALE GENOMIC DNA]</scope>
    <source>
        <strain>ATCC BAA-1253 / SS9</strain>
    </source>
</reference>